<gene>
    <name type="primary">MDV026</name>
</gene>
<feature type="chain" id="PRO_0000406524" description="Tegument protein UL14 homolog">
    <location>
        <begin position="1"/>
        <end position="243"/>
    </location>
</feature>
<proteinExistence type="inferred from homology"/>
<organism>
    <name type="scientific">Gallid herpesvirus 2 (strain Chicken/Md5/ATCC VR-987)</name>
    <name type="common">GaHV-2</name>
    <name type="synonym">Marek's disease herpesvirus type 1</name>
    <dbReference type="NCBI Taxonomy" id="10389"/>
    <lineage>
        <taxon>Viruses</taxon>
        <taxon>Duplodnaviria</taxon>
        <taxon>Heunggongvirae</taxon>
        <taxon>Peploviricota</taxon>
        <taxon>Herviviricetes</taxon>
        <taxon>Herpesvirales</taxon>
        <taxon>Orthoherpesviridae</taxon>
        <taxon>Alphaherpesvirinae</taxon>
        <taxon>Mardivirus</taxon>
        <taxon>Mardivirus gallidalpha2</taxon>
        <taxon>Gallid alphaherpesvirus 2</taxon>
    </lineage>
</organism>
<accession>Q9E6Q3</accession>
<keyword id="KW-1035">Host cytoplasm</keyword>
<keyword id="KW-1048">Host nucleus</keyword>
<keyword id="KW-1185">Reference proteome</keyword>
<keyword id="KW-0946">Virion</keyword>
<keyword id="KW-0920">Virion tegument</keyword>
<protein>
    <recommendedName>
        <fullName>Tegument protein UL14 homolog</fullName>
    </recommendedName>
</protein>
<evidence type="ECO:0000250" key="1"/>
<evidence type="ECO:0000305" key="2"/>
<name>TEG3_GAHVM</name>
<comment type="function">
    <text evidence="1">Contributes to the nuclear transport of the viral transcriptional activator VP16 homolog during the early phase of infection. Therefore, participates indirectly in the regulation of the immediate-early gene expression. Additionally, seems to be important for efficient nuclear targeting of capsids (By similarity).</text>
</comment>
<comment type="subcellular location">
    <subcellularLocation>
        <location evidence="1">Virion tegument</location>
    </subcellularLocation>
    <subcellularLocation>
        <location evidence="1">Host cytoplasm</location>
    </subcellularLocation>
    <subcellularLocation>
        <location evidence="1">Host nucleus</location>
    </subcellularLocation>
</comment>
<comment type="PTM">
    <text evidence="1">Phosphorylated.</text>
</comment>
<comment type="similarity">
    <text evidence="2">Belongs to the alphaherpesvirinae HHV-1 UL14 protein family.</text>
</comment>
<sequence length="243" mass="27861">MFAVSAMRRRRRRILAECRTREAVYKERTLELLSQGVETDDPEFIEVFTSARNAHSDYKAQLRSNMRLEATDRKTKIIQRHIDEQLDRRLILDINRKLLNPKLQLQLDQTEEAILEKEDILAQTIDDITLNDSITNTDELDEESEALLTKWILNQKTKKRPTVAKTAIAPTAHGLQTKVSRNVFITGKDDLVQPTDLGQPSTHEVITCTSRERIIHPDGIHTEIYTTEDVSPTILDDVSDSCV</sequence>
<dbReference type="EMBL" id="AF243438">
    <property type="protein sequence ID" value="AAG14206.1"/>
    <property type="molecule type" value="Genomic_DNA"/>
</dbReference>
<dbReference type="RefSeq" id="YP_001033942.1">
    <property type="nucleotide sequence ID" value="NC_002229.3"/>
</dbReference>
<dbReference type="SMR" id="Q9E6Q3"/>
<dbReference type="GeneID" id="4811487"/>
<dbReference type="KEGG" id="vg:4811487"/>
<dbReference type="Proteomes" id="UP000008072">
    <property type="component" value="Segment"/>
</dbReference>
<dbReference type="GO" id="GO:0030430">
    <property type="term" value="C:host cell cytoplasm"/>
    <property type="evidence" value="ECO:0007669"/>
    <property type="project" value="UniProtKB-SubCell"/>
</dbReference>
<dbReference type="GO" id="GO:0042025">
    <property type="term" value="C:host cell nucleus"/>
    <property type="evidence" value="ECO:0007669"/>
    <property type="project" value="UniProtKB-SubCell"/>
</dbReference>
<dbReference type="GO" id="GO:0019033">
    <property type="term" value="C:viral tegument"/>
    <property type="evidence" value="ECO:0007669"/>
    <property type="project" value="UniProtKB-SubCell"/>
</dbReference>
<dbReference type="InterPro" id="IPR005207">
    <property type="entry name" value="Herpes_UL14"/>
</dbReference>
<dbReference type="Pfam" id="PF03580">
    <property type="entry name" value="Herpes_UL14"/>
    <property type="match status" value="1"/>
</dbReference>
<organismHost>
    <name type="scientific">Gallus gallus</name>
    <name type="common">Chicken</name>
    <dbReference type="NCBI Taxonomy" id="9031"/>
</organismHost>
<reference key="1">
    <citation type="journal article" date="2000" name="J. Virol.">
        <title>The genome of a very virulent Marek's disease virus.</title>
        <authorList>
            <person name="Tulman E.R."/>
            <person name="Afonso C.L."/>
            <person name="Lu Z."/>
            <person name="Zsak L."/>
            <person name="Rock D.L."/>
            <person name="Kutish G.F."/>
        </authorList>
    </citation>
    <scope>NUCLEOTIDE SEQUENCE [LARGE SCALE GENOMIC DNA]</scope>
</reference>